<protein>
    <recommendedName>
        <fullName>Mitochondrial-processing peptidase subunit alpha</fullName>
    </recommendedName>
    <alternativeName>
        <fullName>Alpha-MPP</fullName>
    </alternativeName>
    <alternativeName>
        <fullName evidence="5">Inactive zinc metalloprotease alpha</fullName>
    </alternativeName>
</protein>
<reference key="1">
    <citation type="submission" date="2006-08" db="EMBL/GenBank/DDBJ databases">
        <authorList>
            <consortium name="NIH - Mammalian Gene Collection (MGC) project"/>
        </authorList>
    </citation>
    <scope>NUCLEOTIDE SEQUENCE [LARGE SCALE MRNA]</scope>
    <source>
        <strain>Hereford</strain>
        <tissue>Thalamus</tissue>
    </source>
</reference>
<name>MPPA_BOVIN</name>
<proteinExistence type="evidence at transcript level"/>
<feature type="transit peptide" description="Mitochondrion">
    <location>
        <begin position="1"/>
        <end position="33"/>
    </location>
</feature>
<feature type="chain" id="PRO_0000283040" description="Mitochondrial-processing peptidase subunit alpha">
    <location>
        <begin position="34"/>
        <end position="525"/>
    </location>
</feature>
<feature type="modified residue" description="N6-succinyllysine" evidence="4">
    <location>
        <position position="64"/>
    </location>
</feature>
<feature type="modified residue" description="N6-acetyllysine" evidence="3">
    <location>
        <position position="299"/>
    </location>
</feature>
<evidence type="ECO:0000250" key="1">
    <source>
        <dbReference type="UniProtKB" id="P11914"/>
    </source>
</evidence>
<evidence type="ECO:0000250" key="2">
    <source>
        <dbReference type="UniProtKB" id="P20069"/>
    </source>
</evidence>
<evidence type="ECO:0000250" key="3">
    <source>
        <dbReference type="UniProtKB" id="Q10713"/>
    </source>
</evidence>
<evidence type="ECO:0000250" key="4">
    <source>
        <dbReference type="UniProtKB" id="Q9DC61"/>
    </source>
</evidence>
<evidence type="ECO:0000305" key="5"/>
<gene>
    <name type="primary">PMPCA</name>
</gene>
<comment type="function">
    <text evidence="3">Substrate recognition and binding subunit of the essential mitochondrial processing protease (MPP), which cleaves the mitochondrial sequence off newly imported precursors proteins.</text>
</comment>
<comment type="subunit">
    <text evidence="1">Heterodimer of PMPCA (alpha) and PMPCB (beta) subunits, forming the mitochondrial processing protease (MPP) in which PMPCA is involved in substrate recognition and binding and PMPCB is the catalytic subunit.</text>
</comment>
<comment type="subcellular location">
    <subcellularLocation>
        <location evidence="2">Mitochondrion matrix</location>
    </subcellularLocation>
    <subcellularLocation>
        <location evidence="3">Mitochondrion inner membrane</location>
    </subcellularLocation>
</comment>
<comment type="similarity">
    <text evidence="5">Belongs to the peptidase M16 family.</text>
</comment>
<comment type="caution">
    <text evidence="5">Does not seem to have protease activity as it lacks the zinc-binding site.</text>
</comment>
<accession>Q0P5M8</accession>
<sequence>MAAMVLAATRLLRGSGSWGRSRPRFGDPAYRRFSSGGAYPNIPLSSPLPGVPKPVFATVDGQEKFETKVTTLDNGLRVASQNKFGQFCTVGILINSGSRYEAKYLSGIAHFLEKLAFSSTERFDSKDEILLTLEKHGGICDCQTSRDTTMYAVSADSKGLDTVVGLLADVVLHPRLTDEEIEMARMAVQFELEDLNMRPDPEPLLTEMVHEAAYRENTVGLHRFCPAENVGKMDRDVLHAYLRNYYTPDRMVLAGVGVEHAQLVECARKYLLGTCPAWGTGAAVHVDRSVAQYTGGIVKLERDMSNVSLGPTPFPELTHIMIGLESCSFLEGDFIPFAVLNMMMGGGGSFSAGGPGKGMFTRLYLNVLNRHHWMYNATSYHHSYEDTGLLCIHASADPRQVREMVEIVTREFVLMAGTVDVVELERAKTQLTSMLMMNLEARPVIFEDVGRQVLATRSRKLPHELCALIRDVKPEDIKRVASKMLRGKPAVAALGDLSELPAYEHVQAALASRDGRLPRVYRLFR</sequence>
<dbReference type="EMBL" id="BC119849">
    <property type="protein sequence ID" value="AAI19850.1"/>
    <property type="molecule type" value="mRNA"/>
</dbReference>
<dbReference type="RefSeq" id="NP_001070432.1">
    <property type="nucleotide sequence ID" value="NM_001076964.1"/>
</dbReference>
<dbReference type="SMR" id="Q0P5M8"/>
<dbReference type="FunCoup" id="Q0P5M8">
    <property type="interactions" value="3659"/>
</dbReference>
<dbReference type="STRING" id="9913.ENSBTAP00000001782"/>
<dbReference type="MEROPS" id="M16.985"/>
<dbReference type="MEROPS" id="M16.P01"/>
<dbReference type="PaxDb" id="9913-ENSBTAP00000001782"/>
<dbReference type="Ensembl" id="ENSBTAT00000001782.5">
    <property type="protein sequence ID" value="ENSBTAP00000001782.3"/>
    <property type="gene ID" value="ENSBTAG00000001353.6"/>
</dbReference>
<dbReference type="GeneID" id="767847"/>
<dbReference type="KEGG" id="bta:767847"/>
<dbReference type="CTD" id="23203"/>
<dbReference type="VEuPathDB" id="HostDB:ENSBTAG00000001353"/>
<dbReference type="VGNC" id="VGNC:33075">
    <property type="gene designation" value="PMPCA"/>
</dbReference>
<dbReference type="eggNOG" id="KOG2067">
    <property type="taxonomic scope" value="Eukaryota"/>
</dbReference>
<dbReference type="GeneTree" id="ENSGT00940000156724"/>
<dbReference type="HOGENOM" id="CLU_009902_5_2_1"/>
<dbReference type="InParanoid" id="Q0P5M8"/>
<dbReference type="OMA" id="LKYHHSP"/>
<dbReference type="OrthoDB" id="277191at2759"/>
<dbReference type="TreeFam" id="TF105031"/>
<dbReference type="Reactome" id="R-BTA-8949664">
    <property type="pathway name" value="Processing of SMDT1"/>
</dbReference>
<dbReference type="Reactome" id="R-BTA-9837999">
    <property type="pathway name" value="Mitochondrial protein degradation"/>
</dbReference>
<dbReference type="Proteomes" id="UP000009136">
    <property type="component" value="Chromosome 11"/>
</dbReference>
<dbReference type="Bgee" id="ENSBTAG00000001353">
    <property type="expression patterns" value="Expressed in laryngeal cartilage and 105 other cell types or tissues"/>
</dbReference>
<dbReference type="GO" id="GO:0005743">
    <property type="term" value="C:mitochondrial inner membrane"/>
    <property type="evidence" value="ECO:0000250"/>
    <property type="project" value="UniProtKB"/>
</dbReference>
<dbReference type="GO" id="GO:0005759">
    <property type="term" value="C:mitochondrial matrix"/>
    <property type="evidence" value="ECO:0007669"/>
    <property type="project" value="UniProtKB-SubCell"/>
</dbReference>
<dbReference type="GO" id="GO:0005739">
    <property type="term" value="C:mitochondrion"/>
    <property type="evidence" value="ECO:0000318"/>
    <property type="project" value="GO_Central"/>
</dbReference>
<dbReference type="GO" id="GO:0046872">
    <property type="term" value="F:metal ion binding"/>
    <property type="evidence" value="ECO:0007669"/>
    <property type="project" value="InterPro"/>
</dbReference>
<dbReference type="GO" id="GO:0004222">
    <property type="term" value="F:metalloendopeptidase activity"/>
    <property type="evidence" value="ECO:0007669"/>
    <property type="project" value="InterPro"/>
</dbReference>
<dbReference type="GO" id="GO:0006627">
    <property type="term" value="P:protein processing involved in protein targeting to mitochondrion"/>
    <property type="evidence" value="ECO:0000250"/>
    <property type="project" value="UniProtKB"/>
</dbReference>
<dbReference type="FunFam" id="3.30.830.10:FF:000010">
    <property type="entry name" value="Mitochondrial-processing peptidase alpha subunit, mitochondrial"/>
    <property type="match status" value="1"/>
</dbReference>
<dbReference type="FunFam" id="3.30.830.10:FF:000014">
    <property type="entry name" value="Mitochondrial-processing peptidase alpha subunit, mitochondrial"/>
    <property type="match status" value="1"/>
</dbReference>
<dbReference type="Gene3D" id="3.30.830.10">
    <property type="entry name" value="Metalloenzyme, LuxS/M16 peptidase-like"/>
    <property type="match status" value="2"/>
</dbReference>
<dbReference type="InterPro" id="IPR011249">
    <property type="entry name" value="Metalloenz_LuxS/M16"/>
</dbReference>
<dbReference type="InterPro" id="IPR050361">
    <property type="entry name" value="MPP/UQCRC_Complex"/>
</dbReference>
<dbReference type="InterPro" id="IPR011765">
    <property type="entry name" value="Pept_M16_N"/>
</dbReference>
<dbReference type="InterPro" id="IPR001431">
    <property type="entry name" value="Pept_M16_Zn_BS"/>
</dbReference>
<dbReference type="InterPro" id="IPR007863">
    <property type="entry name" value="Peptidase_M16_C"/>
</dbReference>
<dbReference type="PANTHER" id="PTHR11851">
    <property type="entry name" value="METALLOPROTEASE"/>
    <property type="match status" value="1"/>
</dbReference>
<dbReference type="PANTHER" id="PTHR11851:SF49">
    <property type="entry name" value="MITOCHONDRIAL-PROCESSING PEPTIDASE SUBUNIT ALPHA"/>
    <property type="match status" value="1"/>
</dbReference>
<dbReference type="Pfam" id="PF00675">
    <property type="entry name" value="Peptidase_M16"/>
    <property type="match status" value="1"/>
</dbReference>
<dbReference type="Pfam" id="PF05193">
    <property type="entry name" value="Peptidase_M16_C"/>
    <property type="match status" value="1"/>
</dbReference>
<dbReference type="SUPFAM" id="SSF63411">
    <property type="entry name" value="LuxS/MPP-like metallohydrolase"/>
    <property type="match status" value="2"/>
</dbReference>
<dbReference type="PROSITE" id="PS00143">
    <property type="entry name" value="INSULINASE"/>
    <property type="match status" value="1"/>
</dbReference>
<keyword id="KW-0007">Acetylation</keyword>
<keyword id="KW-0472">Membrane</keyword>
<keyword id="KW-0496">Mitochondrion</keyword>
<keyword id="KW-0999">Mitochondrion inner membrane</keyword>
<keyword id="KW-1185">Reference proteome</keyword>
<keyword id="KW-0809">Transit peptide</keyword>
<organism>
    <name type="scientific">Bos taurus</name>
    <name type="common">Bovine</name>
    <dbReference type="NCBI Taxonomy" id="9913"/>
    <lineage>
        <taxon>Eukaryota</taxon>
        <taxon>Metazoa</taxon>
        <taxon>Chordata</taxon>
        <taxon>Craniata</taxon>
        <taxon>Vertebrata</taxon>
        <taxon>Euteleostomi</taxon>
        <taxon>Mammalia</taxon>
        <taxon>Eutheria</taxon>
        <taxon>Laurasiatheria</taxon>
        <taxon>Artiodactyla</taxon>
        <taxon>Ruminantia</taxon>
        <taxon>Pecora</taxon>
        <taxon>Bovidae</taxon>
        <taxon>Bovinae</taxon>
        <taxon>Bos</taxon>
    </lineage>
</organism>